<proteinExistence type="evidence at protein level"/>
<keyword id="KW-0002">3D-structure</keyword>
<keyword id="KW-0119">Carbohydrate metabolism</keyword>
<keyword id="KW-0146">Chitin degradation</keyword>
<keyword id="KW-0326">Glycosidase</keyword>
<keyword id="KW-0378">Hydrolase</keyword>
<keyword id="KW-0624">Polysaccharide degradation</keyword>
<keyword id="KW-0964">Secreted</keyword>
<keyword id="KW-0843">Virulence</keyword>
<dbReference type="EC" id="3.2.1.14" evidence="7"/>
<dbReference type="EMBL" id="DQ400808">
    <property type="protein sequence ID" value="ABG33867.1"/>
    <property type="molecule type" value="Genomic_DNA"/>
</dbReference>
<dbReference type="RefSeq" id="WP_064513229.1">
    <property type="nucleotide sequence ID" value="NZ_CP010029.1"/>
</dbReference>
<dbReference type="PDB" id="4DWS">
    <property type="method" value="X-ray"/>
    <property type="resolution" value="1.80 A"/>
    <property type="chains" value="A/B/C/D=92-633"/>
</dbReference>
<dbReference type="PDB" id="6OGD">
    <property type="method" value="EM"/>
    <property type="resolution" value="4.40 A"/>
    <property type="chains" value="C/F/I/L/O=1-633"/>
</dbReference>
<dbReference type="PDBsum" id="4DWS"/>
<dbReference type="PDBsum" id="6OGD"/>
<dbReference type="EMDB" id="EMD-20053"/>
<dbReference type="EMDB" id="EMD-20054"/>
<dbReference type="SMR" id="B6A879"/>
<dbReference type="DIP" id="DIP-60376N"/>
<dbReference type="IntAct" id="B6A879">
    <property type="interactions" value="1"/>
</dbReference>
<dbReference type="STRING" id="935293.PL78_03755"/>
<dbReference type="KEGG" id="yeg:PL78_03755"/>
<dbReference type="PATRIC" id="fig|935293.3.peg.808"/>
<dbReference type="OrthoDB" id="9775889at2"/>
<dbReference type="EvolutionaryTrace" id="B6A879"/>
<dbReference type="GO" id="GO:0005576">
    <property type="term" value="C:extracellular region"/>
    <property type="evidence" value="ECO:0007669"/>
    <property type="project" value="UniProtKB-SubCell"/>
</dbReference>
<dbReference type="GO" id="GO:0008061">
    <property type="term" value="F:chitin binding"/>
    <property type="evidence" value="ECO:0007669"/>
    <property type="project" value="InterPro"/>
</dbReference>
<dbReference type="GO" id="GO:0008843">
    <property type="term" value="F:endochitinase activity"/>
    <property type="evidence" value="ECO:0007669"/>
    <property type="project" value="UniProtKB-EC"/>
</dbReference>
<dbReference type="GO" id="GO:0006032">
    <property type="term" value="P:chitin catabolic process"/>
    <property type="evidence" value="ECO:0007669"/>
    <property type="project" value="UniProtKB-KW"/>
</dbReference>
<dbReference type="GO" id="GO:0000272">
    <property type="term" value="P:polysaccharide catabolic process"/>
    <property type="evidence" value="ECO:0007669"/>
    <property type="project" value="UniProtKB-KW"/>
</dbReference>
<dbReference type="Gene3D" id="3.10.50.10">
    <property type="match status" value="1"/>
</dbReference>
<dbReference type="Gene3D" id="3.20.20.80">
    <property type="entry name" value="Glycosidases"/>
    <property type="match status" value="1"/>
</dbReference>
<dbReference type="InterPro" id="IPR011583">
    <property type="entry name" value="Chitinase_II/V-like_cat"/>
</dbReference>
<dbReference type="InterPro" id="IPR029070">
    <property type="entry name" value="Chitinase_insertion_sf"/>
</dbReference>
<dbReference type="InterPro" id="IPR001223">
    <property type="entry name" value="Glyco_hydro18_cat"/>
</dbReference>
<dbReference type="InterPro" id="IPR017853">
    <property type="entry name" value="Glycoside_hydrolase_SF"/>
</dbReference>
<dbReference type="InterPro" id="IPR050314">
    <property type="entry name" value="Glycosyl_Hydrlase_18"/>
</dbReference>
<dbReference type="PANTHER" id="PTHR11177">
    <property type="entry name" value="CHITINASE"/>
    <property type="match status" value="1"/>
</dbReference>
<dbReference type="PANTHER" id="PTHR11177:SF317">
    <property type="entry name" value="CHITINASE 12-RELATED"/>
    <property type="match status" value="1"/>
</dbReference>
<dbReference type="Pfam" id="PF00704">
    <property type="entry name" value="Glyco_hydro_18"/>
    <property type="match status" value="1"/>
</dbReference>
<dbReference type="SMART" id="SM00636">
    <property type="entry name" value="Glyco_18"/>
    <property type="match status" value="1"/>
</dbReference>
<dbReference type="SUPFAM" id="SSF51445">
    <property type="entry name" value="(Trans)glycosidases"/>
    <property type="match status" value="1"/>
</dbReference>
<dbReference type="SUPFAM" id="SSF54556">
    <property type="entry name" value="Chitinase insertion domain"/>
    <property type="match status" value="1"/>
</dbReference>
<dbReference type="PROSITE" id="PS51910">
    <property type="entry name" value="GH18_2"/>
    <property type="match status" value="1"/>
</dbReference>
<name>CHI2_YERET</name>
<gene>
    <name evidence="5" type="primary">chi2</name>
</gene>
<protein>
    <recommendedName>
        <fullName evidence="5">Chitinase 2</fullName>
        <ecNumber evidence="7">3.2.1.14</ecNumber>
    </recommendedName>
</protein>
<organism>
    <name type="scientific">Yersinia entomophaga</name>
    <dbReference type="NCBI Taxonomy" id="935293"/>
    <lineage>
        <taxon>Bacteria</taxon>
        <taxon>Pseudomonadati</taxon>
        <taxon>Pseudomonadota</taxon>
        <taxon>Gammaproteobacteria</taxon>
        <taxon>Enterobacterales</taxon>
        <taxon>Yersiniaceae</taxon>
        <taxon>Yersinia</taxon>
    </lineage>
</organism>
<comment type="function">
    <text evidence="2 4 7">Part of an orally active toxin complex (TC) with strong insecticidal effects on larvae of the Coleoptera Costelytra zealandica, Acrossidius tasmania and Adoryphorus couloni and some Lepidoptera larvae (PubMed:21278295). The TC has an endochitinase activity (Probable) (PubMed:21278295, PubMed:22158901). This subunit might aid infection by degradation of the larval peritrophic membrane (Probable).</text>
</comment>
<comment type="catalytic activity">
    <reaction evidence="7">
        <text>Random endo-hydrolysis of N-acetyl-beta-D-glucosaminide (1-&gt;4)-beta-linkages in chitin and chitodextrins.</text>
        <dbReference type="EC" id="3.2.1.14"/>
    </reaction>
</comment>
<comment type="activity regulation">
    <text evidence="2">Toxin complex is secreted when grown at 25 degrees Celsius or less; at higher temperatures the proteins are present intracellularly but not secreted.</text>
</comment>
<comment type="biophysicochemical properties">
    <kinetics>
        <KM evidence="3">230 uM for 4-methylumbelliferyl-beta-D-N,N',N''-triacetylchitotrioside</KM>
        <text evidence="3">In the intact toxin complex the combined chitinase activity of Chi1 and Chi2 is slightly reduced.</text>
    </kinetics>
    <phDependence>
        <text evidence="3">Optimum pH is 5.0, in the intact toxin complex optimum pH is pH 4.0 to pH 8.0.</text>
    </phDependence>
</comment>
<comment type="subunit">
    <text evidence="2 4">Semipurified toxin complex consists of at least YenA1-YenA2-YenB-YenC1-YenC2-Chi1-Chi2 (PubMed:21278295). The Yen-TC:K9 subcomplex is about 26 nm tall and 22 nm in diameter with 5-fold symmetry and 5 copies of YenA1, YenA2, Chi1 and Chi2; the chitinase subunits may be solvent accessible on the exterior the complex (PubMed:22158901). The Yen-TC:K9 subcomplex has no insecticidal activity (PubMed:22158901). The native complex with additional YenB, YenC1 and YenC2 subunits is 16 nm taller and is insecticidal; the toxicity-conferring subunits are present at about 1 copy each (PubMed:22158901).</text>
</comment>
<comment type="subcellular location">
    <subcellularLocation>
        <location evidence="2">Secreted</location>
    </subcellularLocation>
    <text evidence="2">Secreted when grown at 25 degrees Celsius or less, but not when grown at 30 or 37 degrees Celsius.</text>
</comment>
<comment type="disruption phenotype">
    <text evidence="2">Cells with a disrupted yenA1-yenA2-chi2-yenB-yenC1-yenC2 locus are no longer pathogenic in C.zealandica larvae.</text>
</comment>
<comment type="similarity">
    <text evidence="6">Belongs to the glycosyl hydrolase 18 family.</text>
</comment>
<feature type="chain" id="PRO_0000445777" description="Chitinase 2">
    <location>
        <begin position="1"/>
        <end position="633"/>
    </location>
</feature>
<feature type="domain" description="GH18" evidence="1">
    <location>
        <begin position="151"/>
        <end position="602"/>
    </location>
</feature>
<feature type="active site" description="Proton donor" evidence="1">
    <location>
        <position position="349"/>
    </location>
</feature>
<feature type="binding site" evidence="1">
    <location>
        <begin position="275"/>
        <end position="276"/>
    </location>
    <ligand>
        <name>chitin</name>
        <dbReference type="ChEBI" id="CHEBI:17029"/>
    </ligand>
</feature>
<feature type="binding site" evidence="1">
    <location>
        <begin position="306"/>
        <end position="309"/>
    </location>
    <ligand>
        <name>chitin</name>
        <dbReference type="ChEBI" id="CHEBI:17029"/>
    </ligand>
</feature>
<feature type="binding site" evidence="1">
    <location>
        <position position="350"/>
    </location>
    <ligand>
        <name>chitin</name>
        <dbReference type="ChEBI" id="CHEBI:17029"/>
    </ligand>
</feature>
<feature type="binding site" evidence="1">
    <location>
        <begin position="422"/>
        <end position="425"/>
    </location>
    <ligand>
        <name>chitin</name>
        <dbReference type="ChEBI" id="CHEBI:17029"/>
    </ligand>
</feature>
<feature type="binding site" evidence="1">
    <location>
        <position position="582"/>
    </location>
    <ligand>
        <name>chitin</name>
        <dbReference type="ChEBI" id="CHEBI:17029"/>
    </ligand>
</feature>
<feature type="helix" evidence="9">
    <location>
        <begin position="107"/>
        <end position="114"/>
    </location>
</feature>
<feature type="turn" evidence="9">
    <location>
        <begin position="116"/>
        <end position="118"/>
    </location>
</feature>
<feature type="strand" evidence="9">
    <location>
        <begin position="124"/>
        <end position="126"/>
    </location>
</feature>
<feature type="helix" evidence="9">
    <location>
        <begin position="134"/>
        <end position="136"/>
    </location>
</feature>
<feature type="strand" evidence="9">
    <location>
        <begin position="152"/>
        <end position="160"/>
    </location>
</feature>
<feature type="helix" evidence="9">
    <location>
        <begin position="165"/>
        <end position="168"/>
    </location>
</feature>
<feature type="helix" evidence="9">
    <location>
        <begin position="174"/>
        <end position="176"/>
    </location>
</feature>
<feature type="helix" evidence="9">
    <location>
        <begin position="184"/>
        <end position="187"/>
    </location>
</feature>
<feature type="strand" evidence="9">
    <location>
        <begin position="194"/>
        <end position="203"/>
    </location>
</feature>
<feature type="helix" evidence="9">
    <location>
        <begin position="212"/>
        <end position="224"/>
    </location>
</feature>
<feature type="helix" evidence="9">
    <location>
        <begin position="226"/>
        <end position="228"/>
    </location>
</feature>
<feature type="strand" evidence="9">
    <location>
        <begin position="238"/>
        <end position="241"/>
    </location>
</feature>
<feature type="helix" evidence="9">
    <location>
        <begin position="243"/>
        <end position="247"/>
    </location>
</feature>
<feature type="turn" evidence="9">
    <location>
        <begin position="251"/>
        <end position="254"/>
    </location>
</feature>
<feature type="helix" evidence="9">
    <location>
        <begin position="257"/>
        <end position="259"/>
    </location>
</feature>
<feature type="turn" evidence="9">
    <location>
        <begin position="266"/>
        <end position="268"/>
    </location>
</feature>
<feature type="helix" evidence="9">
    <location>
        <begin position="270"/>
        <end position="272"/>
    </location>
</feature>
<feature type="turn" evidence="9">
    <location>
        <begin position="275"/>
        <end position="277"/>
    </location>
</feature>
<feature type="helix" evidence="9">
    <location>
        <begin position="280"/>
        <end position="289"/>
    </location>
</feature>
<feature type="helix" evidence="9">
    <location>
        <begin position="293"/>
        <end position="295"/>
    </location>
</feature>
<feature type="strand" evidence="9">
    <location>
        <begin position="300"/>
        <end position="306"/>
    </location>
</feature>
<feature type="helix" evidence="9">
    <location>
        <begin position="314"/>
        <end position="319"/>
    </location>
</feature>
<feature type="helix" evidence="9">
    <location>
        <begin position="321"/>
        <end position="337"/>
    </location>
</feature>
<feature type="strand" evidence="9">
    <location>
        <begin position="341"/>
        <end position="347"/>
    </location>
</feature>
<feature type="helix" evidence="9">
    <location>
        <begin position="365"/>
        <end position="384"/>
    </location>
</feature>
<feature type="turn" evidence="9">
    <location>
        <begin position="385"/>
        <end position="387"/>
    </location>
</feature>
<feature type="strand" evidence="9">
    <location>
        <begin position="391"/>
        <end position="398"/>
    </location>
</feature>
<feature type="helix" evidence="9">
    <location>
        <begin position="404"/>
        <end position="406"/>
    </location>
</feature>
<feature type="helix" evidence="9">
    <location>
        <begin position="408"/>
        <end position="413"/>
    </location>
</feature>
<feature type="strand" evidence="9">
    <location>
        <begin position="418"/>
        <end position="422"/>
    </location>
</feature>
<feature type="turn" evidence="9">
    <location>
        <begin position="429"/>
        <end position="431"/>
    </location>
</feature>
<feature type="strand" evidence="9">
    <location>
        <begin position="450"/>
        <end position="454"/>
    </location>
</feature>
<feature type="helix" evidence="9">
    <location>
        <begin position="457"/>
        <end position="466"/>
    </location>
</feature>
<feature type="helix" evidence="9">
    <location>
        <begin position="472"/>
        <end position="474"/>
    </location>
</feature>
<feature type="strand" evidence="9">
    <location>
        <begin position="475"/>
        <end position="482"/>
    </location>
</feature>
<feature type="strand" evidence="9">
    <location>
        <begin position="484"/>
        <end position="488"/>
    </location>
</feature>
<feature type="turn" evidence="9">
    <location>
        <begin position="491"/>
        <end position="493"/>
    </location>
</feature>
<feature type="strand" evidence="9">
    <location>
        <begin position="504"/>
        <end position="507"/>
    </location>
</feature>
<feature type="helix" evidence="9">
    <location>
        <begin position="513"/>
        <end position="519"/>
    </location>
</feature>
<feature type="strand" evidence="9">
    <location>
        <begin position="524"/>
        <end position="527"/>
    </location>
</feature>
<feature type="strand" evidence="9">
    <location>
        <begin position="535"/>
        <end position="539"/>
    </location>
</feature>
<feature type="turn" evidence="9">
    <location>
        <begin position="540"/>
        <end position="543"/>
    </location>
</feature>
<feature type="strand" evidence="9">
    <location>
        <begin position="544"/>
        <end position="550"/>
    </location>
</feature>
<feature type="strand" evidence="9">
    <location>
        <begin position="554"/>
        <end position="557"/>
    </location>
</feature>
<feature type="helix" evidence="9">
    <location>
        <begin position="561"/>
        <end position="564"/>
    </location>
</feature>
<feature type="helix" evidence="9">
    <location>
        <begin position="567"/>
        <end position="573"/>
    </location>
</feature>
<feature type="strand" evidence="9">
    <location>
        <begin position="577"/>
        <end position="582"/>
    </location>
</feature>
<feature type="helix" evidence="9">
    <location>
        <begin position="584"/>
        <end position="586"/>
    </location>
</feature>
<feature type="helix" evidence="9">
    <location>
        <begin position="590"/>
        <end position="599"/>
    </location>
</feature>
<feature type="helix" evidence="9">
    <location>
        <begin position="613"/>
        <end position="616"/>
    </location>
</feature>
<feature type="strand" evidence="9">
    <location>
        <begin position="620"/>
        <end position="622"/>
    </location>
</feature>
<feature type="helix" evidence="9">
    <location>
        <begin position="627"/>
        <end position="631"/>
    </location>
</feature>
<evidence type="ECO:0000255" key="1">
    <source>
        <dbReference type="PROSITE-ProRule" id="PRU01258"/>
    </source>
</evidence>
<evidence type="ECO:0000269" key="2">
    <source>
    </source>
</evidence>
<evidence type="ECO:0000269" key="3">
    <source>
    </source>
</evidence>
<evidence type="ECO:0000269" key="4">
    <source>
    </source>
</evidence>
<evidence type="ECO:0000303" key="5">
    <source>
    </source>
</evidence>
<evidence type="ECO:0000305" key="6"/>
<evidence type="ECO:0000305" key="7">
    <source>
    </source>
</evidence>
<evidence type="ECO:0007744" key="8">
    <source>
        <dbReference type="PDB" id="4DWS"/>
    </source>
</evidence>
<evidence type="ECO:0007829" key="9">
    <source>
        <dbReference type="PDB" id="4DWS"/>
    </source>
</evidence>
<accession>B6A879</accession>
<reference key="1">
    <citation type="journal article" date="2011" name="J. Bacteriol.">
        <title>The main virulence determinant of Yersinia entomophaga MH96 is a broad-host-range toxin complex active against insects.</title>
        <authorList>
            <person name="Hurst M.R."/>
            <person name="Jones S.A."/>
            <person name="Binglin T."/>
            <person name="Harper L.A."/>
            <person name="Jackson T.A."/>
            <person name="Glare T.R."/>
        </authorList>
    </citation>
    <scope>NUCLEOTIDE SEQUENCE [GENOMIC DNA]</scope>
    <scope>IDENTIFICATION BY MASS SPECTROMETRY</scope>
    <scope>FUNCTION</scope>
    <scope>ACTIVITY REGULATION</scope>
    <scope>SUBUNIT</scope>
    <scope>SUBCELLULAR LOCATION</scope>
    <scope>DISRUPTION PHENOTYPE</scope>
    <source>
        <strain>ATCC BAA-1678 / DSM 22339 / MH96</strain>
    </source>
</reference>
<reference key="2">
    <citation type="journal article" date="2012" name="J. Mol. Biol.">
        <title>Structural analysis of Chi1 chitinase from Yen-Tc: the multisubunit insecticidal ABC toxin complex of Yersinia entomophaga.</title>
        <authorList>
            <person name="Busby J.N."/>
            <person name="Landsberg M.J."/>
            <person name="Simpson R.M."/>
            <person name="Jones S.A."/>
            <person name="Hankamer B."/>
            <person name="Hurst M.R."/>
            <person name="Lott J.S."/>
        </authorList>
    </citation>
    <scope>FUNCTION</scope>
    <scope>CATALYTIC ACTIVITY</scope>
    <scope>BIOPHYSICOCHEMICAL PROPERTIES</scope>
    <source>
        <strain>ATCC BAA-1678 / DSM 22339 / MH96</strain>
    </source>
</reference>
<reference key="3">
    <citation type="journal article" date="2011" name="Proc. Natl. Acad. Sci. U.S.A.">
        <title>3D structure of the Yersinia entomophaga toxin complex and implications for insecticidal activity.</title>
        <authorList>
            <person name="Landsberg M.J."/>
            <person name="Jones S.A."/>
            <person name="Rothnagel R."/>
            <person name="Busby J.N."/>
            <person name="Marshall S.D."/>
            <person name="Simpson R.M."/>
            <person name="Lott J.S."/>
            <person name="Hankamer B."/>
            <person name="Hurst M.R."/>
        </authorList>
    </citation>
    <scope>ELECTRON MICROSCOPY (17.0 ANGSTROMS) OF YEN-TC:K9 COMPLEX</scope>
    <scope>FUNCTION</scope>
    <scope>SUBUNIT</scope>
    <source>
        <strain>ATCC BAA-1678 / DSM 22339 / MH96</strain>
    </source>
</reference>
<reference evidence="8" key="4">
    <citation type="journal article" date="2013" name="Nature">
        <title>The BC component of ABC toxins is an RHS-repeat-containing protein encapsulation device.</title>
        <authorList>
            <person name="Busby J.N."/>
            <person name="Panjikar S."/>
            <person name="Landsberg M.J."/>
            <person name="Hurst M.R."/>
            <person name="Lott J.S."/>
        </authorList>
    </citation>
    <scope>X-RAY CRYSTALLOGRAPHY (1.80 ANGSTROMS) OF 92-633</scope>
    <source>
        <strain>ATCC BAA-1678 / DSM 22339 / MH96</strain>
    </source>
</reference>
<sequence length="633" mass="69668">MVNKYTYTSSKAMSDISDVIGEPLAAWDSQVGGRVFNVIFDGKVYTNTYWVERWQVPGIGSSDGNPHNAWKFVRAATADEINKIGNPTTADVKPTENIPSPILVEDKYTEETYSRPDVNFKEDGSQGNLSYTATRVCAPMYNHYVGDKTKPKLSAYITDWCQYDARLDGGGSKEEERGRGFDLATLMQNPATYDRLIFSFLGICGDIGNKSKKVQEVWDGWNAQAPSLGLPQIGKGHIVPLDPYGDLGTARNVGLPPESADTSIESGTFLPYYQQNRAAGLLGGLRELQKKAHAMGHKLDLAFSIGGWSLSSYFSALAENPDERRVFVASVVDFFVRFPMFSCVDIDWEYPGGGGDEGNISSDKDGENYVLLIKELRSALDSRFGYSNRKEISIACSGVKAKLKKSNIDQLVANGLDNIYLMSYDFFGTIWADYIGHHTNLYSPKDPGEQELFDLSAEAAIDYLHNELGIPMEKIHLGYANYGRSAVGGDLTTRQYTKNGPALGTMENGAPEFFDIVKNYMDAEHSLSMGKNGFVLMTDTNADADFLFSEAKGHFISLDTPRTVKQKGEYAAKNKLGGVFSWSGDQDCGLLANAAREGLGYVADSNQETIDMGPLYNPGKEIYLKSISEIKSK</sequence>